<sequence length="352" mass="39338">MQNRKIIHIDADCFYAAIEMRDDPNLRDIPMAIGGPASGRSVLSTANYAARVYGVRSAMPTSVAKRLCPALLVIPGNMNKYRLASEQMHAIFREFTDIIEPLSLDEAYLDVTNSSSFQGSATRIAEEIRSRILKEVGITVSAGVATNKFIAKVASDWDKPDGLTVVTPEKQFEFVSNVPVKFISGIGRVAQEKLASLGVFKCSDLQALDFSVLQKSFGSMSFRLSQFALGIDDRPVTVSRERKSISVEHTFSKDLLDLKECQAVLPILLTDLKKRMSGRDFESQLSKYYLKVKFDDFKQTTIEQPIKAKLSDDVFSQLLQQAYSRSRRPVRLIGVGYRLSPPELHQLNLPFV</sequence>
<protein>
    <recommendedName>
        <fullName evidence="1">DNA polymerase IV</fullName>
        <shortName evidence="1">Pol IV</shortName>
        <ecNumber evidence="1">2.7.7.7</ecNumber>
    </recommendedName>
</protein>
<keyword id="KW-0963">Cytoplasm</keyword>
<keyword id="KW-0227">DNA damage</keyword>
<keyword id="KW-0234">DNA repair</keyword>
<keyword id="KW-0235">DNA replication</keyword>
<keyword id="KW-0238">DNA-binding</keyword>
<keyword id="KW-0239">DNA-directed DNA polymerase</keyword>
<keyword id="KW-0460">Magnesium</keyword>
<keyword id="KW-0479">Metal-binding</keyword>
<keyword id="KW-0515">Mutator protein</keyword>
<keyword id="KW-0548">Nucleotidyltransferase</keyword>
<keyword id="KW-0808">Transferase</keyword>
<organism>
    <name type="scientific">Marinomonas sp. (strain MWYL1)</name>
    <dbReference type="NCBI Taxonomy" id="400668"/>
    <lineage>
        <taxon>Bacteria</taxon>
        <taxon>Pseudomonadati</taxon>
        <taxon>Pseudomonadota</taxon>
        <taxon>Gammaproteobacteria</taxon>
        <taxon>Oceanospirillales</taxon>
        <taxon>Oceanospirillaceae</taxon>
        <taxon>Marinomonas</taxon>
    </lineage>
</organism>
<comment type="function">
    <text evidence="1">Poorly processive, error-prone DNA polymerase involved in untargeted mutagenesis. Copies undamaged DNA at stalled replication forks, which arise in vivo from mismatched or misaligned primer ends. These misaligned primers can be extended by PolIV. Exhibits no 3'-5' exonuclease (proofreading) activity. May be involved in translesional synthesis, in conjunction with the beta clamp from PolIII.</text>
</comment>
<comment type="catalytic activity">
    <reaction evidence="1">
        <text>DNA(n) + a 2'-deoxyribonucleoside 5'-triphosphate = DNA(n+1) + diphosphate</text>
        <dbReference type="Rhea" id="RHEA:22508"/>
        <dbReference type="Rhea" id="RHEA-COMP:17339"/>
        <dbReference type="Rhea" id="RHEA-COMP:17340"/>
        <dbReference type="ChEBI" id="CHEBI:33019"/>
        <dbReference type="ChEBI" id="CHEBI:61560"/>
        <dbReference type="ChEBI" id="CHEBI:173112"/>
        <dbReference type="EC" id="2.7.7.7"/>
    </reaction>
</comment>
<comment type="cofactor">
    <cofactor evidence="1">
        <name>Mg(2+)</name>
        <dbReference type="ChEBI" id="CHEBI:18420"/>
    </cofactor>
    <text evidence="1">Binds 2 magnesium ions per subunit.</text>
</comment>
<comment type="subunit">
    <text evidence="1">Monomer.</text>
</comment>
<comment type="subcellular location">
    <subcellularLocation>
        <location evidence="1">Cytoplasm</location>
    </subcellularLocation>
</comment>
<comment type="similarity">
    <text evidence="1">Belongs to the DNA polymerase type-Y family.</text>
</comment>
<accession>A6W1V6</accession>
<name>DPO4_MARMS</name>
<feature type="chain" id="PRO_1000084901" description="DNA polymerase IV">
    <location>
        <begin position="1"/>
        <end position="352"/>
    </location>
</feature>
<feature type="domain" description="UmuC" evidence="1">
    <location>
        <begin position="6"/>
        <end position="187"/>
    </location>
</feature>
<feature type="active site" evidence="1">
    <location>
        <position position="106"/>
    </location>
</feature>
<feature type="binding site" evidence="1">
    <location>
        <position position="10"/>
    </location>
    <ligand>
        <name>Mg(2+)</name>
        <dbReference type="ChEBI" id="CHEBI:18420"/>
    </ligand>
</feature>
<feature type="binding site" evidence="1">
    <location>
        <position position="105"/>
    </location>
    <ligand>
        <name>Mg(2+)</name>
        <dbReference type="ChEBI" id="CHEBI:18420"/>
    </ligand>
</feature>
<feature type="site" description="Substrate discrimination" evidence="1">
    <location>
        <position position="15"/>
    </location>
</feature>
<proteinExistence type="inferred from homology"/>
<gene>
    <name evidence="1" type="primary">dinB</name>
    <name type="ordered locus">Mmwyl1_3784</name>
</gene>
<reference key="1">
    <citation type="submission" date="2007-06" db="EMBL/GenBank/DDBJ databases">
        <title>Complete sequence of Marinomonas sp. MWYL1.</title>
        <authorList>
            <consortium name="US DOE Joint Genome Institute"/>
            <person name="Copeland A."/>
            <person name="Lucas S."/>
            <person name="Lapidus A."/>
            <person name="Barry K."/>
            <person name="Glavina del Rio T."/>
            <person name="Dalin E."/>
            <person name="Tice H."/>
            <person name="Pitluck S."/>
            <person name="Kiss H."/>
            <person name="Brettin T."/>
            <person name="Bruce D."/>
            <person name="Detter J.C."/>
            <person name="Han C."/>
            <person name="Schmutz J."/>
            <person name="Larimer F."/>
            <person name="Land M."/>
            <person name="Hauser L."/>
            <person name="Kyrpides N."/>
            <person name="Kim E."/>
            <person name="Johnston A.W.B."/>
            <person name="Todd J.D."/>
            <person name="Rogers R."/>
            <person name="Wexler M."/>
            <person name="Bond P.L."/>
            <person name="Li Y."/>
            <person name="Richardson P."/>
        </authorList>
    </citation>
    <scope>NUCLEOTIDE SEQUENCE [LARGE SCALE GENOMIC DNA]</scope>
    <source>
        <strain>MWYL1</strain>
    </source>
</reference>
<dbReference type="EC" id="2.7.7.7" evidence="1"/>
<dbReference type="EMBL" id="CP000749">
    <property type="protein sequence ID" value="ABR72685.1"/>
    <property type="molecule type" value="Genomic_DNA"/>
</dbReference>
<dbReference type="SMR" id="A6W1V6"/>
<dbReference type="STRING" id="400668.Mmwyl1_3784"/>
<dbReference type="KEGG" id="mmw:Mmwyl1_3784"/>
<dbReference type="eggNOG" id="COG0389">
    <property type="taxonomic scope" value="Bacteria"/>
</dbReference>
<dbReference type="HOGENOM" id="CLU_012348_1_2_6"/>
<dbReference type="OrthoDB" id="9808813at2"/>
<dbReference type="GO" id="GO:0005829">
    <property type="term" value="C:cytosol"/>
    <property type="evidence" value="ECO:0007669"/>
    <property type="project" value="TreeGrafter"/>
</dbReference>
<dbReference type="GO" id="GO:0003684">
    <property type="term" value="F:damaged DNA binding"/>
    <property type="evidence" value="ECO:0007669"/>
    <property type="project" value="InterPro"/>
</dbReference>
<dbReference type="GO" id="GO:0003887">
    <property type="term" value="F:DNA-directed DNA polymerase activity"/>
    <property type="evidence" value="ECO:0007669"/>
    <property type="project" value="UniProtKB-UniRule"/>
</dbReference>
<dbReference type="GO" id="GO:0000287">
    <property type="term" value="F:magnesium ion binding"/>
    <property type="evidence" value="ECO:0007669"/>
    <property type="project" value="UniProtKB-UniRule"/>
</dbReference>
<dbReference type="GO" id="GO:0006261">
    <property type="term" value="P:DNA-templated DNA replication"/>
    <property type="evidence" value="ECO:0007669"/>
    <property type="project" value="UniProtKB-UniRule"/>
</dbReference>
<dbReference type="GO" id="GO:0042276">
    <property type="term" value="P:error-prone translesion synthesis"/>
    <property type="evidence" value="ECO:0007669"/>
    <property type="project" value="TreeGrafter"/>
</dbReference>
<dbReference type="GO" id="GO:0009432">
    <property type="term" value="P:SOS response"/>
    <property type="evidence" value="ECO:0007669"/>
    <property type="project" value="TreeGrafter"/>
</dbReference>
<dbReference type="CDD" id="cd03586">
    <property type="entry name" value="PolY_Pol_IV_kappa"/>
    <property type="match status" value="1"/>
</dbReference>
<dbReference type="Gene3D" id="3.30.70.270">
    <property type="match status" value="1"/>
</dbReference>
<dbReference type="Gene3D" id="3.40.1170.60">
    <property type="match status" value="1"/>
</dbReference>
<dbReference type="Gene3D" id="1.10.150.20">
    <property type="entry name" value="5' to 3' exonuclease, C-terminal subdomain"/>
    <property type="match status" value="1"/>
</dbReference>
<dbReference type="Gene3D" id="3.30.1490.100">
    <property type="entry name" value="DNA polymerase, Y-family, little finger domain"/>
    <property type="match status" value="1"/>
</dbReference>
<dbReference type="HAMAP" id="MF_01113">
    <property type="entry name" value="DNApol_IV"/>
    <property type="match status" value="1"/>
</dbReference>
<dbReference type="InterPro" id="IPR043502">
    <property type="entry name" value="DNA/RNA_pol_sf"/>
</dbReference>
<dbReference type="InterPro" id="IPR036775">
    <property type="entry name" value="DNA_pol_Y-fam_lit_finger_sf"/>
</dbReference>
<dbReference type="InterPro" id="IPR017961">
    <property type="entry name" value="DNA_pol_Y-fam_little_finger"/>
</dbReference>
<dbReference type="InterPro" id="IPR050116">
    <property type="entry name" value="DNA_polymerase-Y"/>
</dbReference>
<dbReference type="InterPro" id="IPR022880">
    <property type="entry name" value="DNApol_IV"/>
</dbReference>
<dbReference type="InterPro" id="IPR053848">
    <property type="entry name" value="IMS_HHH_1"/>
</dbReference>
<dbReference type="InterPro" id="IPR043128">
    <property type="entry name" value="Rev_trsase/Diguanyl_cyclase"/>
</dbReference>
<dbReference type="InterPro" id="IPR001126">
    <property type="entry name" value="UmuC"/>
</dbReference>
<dbReference type="NCBIfam" id="NF002677">
    <property type="entry name" value="PRK02406.1"/>
    <property type="match status" value="1"/>
</dbReference>
<dbReference type="PANTHER" id="PTHR11076:SF33">
    <property type="entry name" value="DNA POLYMERASE KAPPA"/>
    <property type="match status" value="1"/>
</dbReference>
<dbReference type="PANTHER" id="PTHR11076">
    <property type="entry name" value="DNA REPAIR POLYMERASE UMUC / TRANSFERASE FAMILY MEMBER"/>
    <property type="match status" value="1"/>
</dbReference>
<dbReference type="Pfam" id="PF00817">
    <property type="entry name" value="IMS"/>
    <property type="match status" value="1"/>
</dbReference>
<dbReference type="Pfam" id="PF11799">
    <property type="entry name" value="IMS_C"/>
    <property type="match status" value="1"/>
</dbReference>
<dbReference type="Pfam" id="PF21999">
    <property type="entry name" value="IMS_HHH_1"/>
    <property type="match status" value="1"/>
</dbReference>
<dbReference type="SUPFAM" id="SSF56672">
    <property type="entry name" value="DNA/RNA polymerases"/>
    <property type="match status" value="1"/>
</dbReference>
<dbReference type="SUPFAM" id="SSF100879">
    <property type="entry name" value="Lesion bypass DNA polymerase (Y-family), little finger domain"/>
    <property type="match status" value="1"/>
</dbReference>
<dbReference type="PROSITE" id="PS50173">
    <property type="entry name" value="UMUC"/>
    <property type="match status" value="1"/>
</dbReference>
<evidence type="ECO:0000255" key="1">
    <source>
        <dbReference type="HAMAP-Rule" id="MF_01113"/>
    </source>
</evidence>